<comment type="function">
    <text>Involved in transport of capsular polysaccharides to the cell surface. May function as a membrane anchor for capsular polysaccharides. Possible porin properties.</text>
</comment>
<comment type="subcellular location">
    <subcellularLocation>
        <location>Cell outer membrane</location>
        <topology>Multi-pass membrane protein</topology>
    </subcellularLocation>
</comment>
<comment type="similarity">
    <text evidence="3">Belongs to the BexD/CtrA/VexA family.</text>
</comment>
<name>CTRA_NEIMA</name>
<dbReference type="EMBL" id="M80593">
    <property type="protein sequence ID" value="AAA25457.1"/>
    <property type="molecule type" value="Genomic_DNA"/>
</dbReference>
<dbReference type="EMBL" id="AL157959">
    <property type="protein sequence ID" value="CAM07512.1"/>
    <property type="molecule type" value="Genomic_DNA"/>
</dbReference>
<dbReference type="PIR" id="A82014">
    <property type="entry name" value="A82014"/>
</dbReference>
<dbReference type="RefSeq" id="WP_002236580.1">
    <property type="nucleotide sequence ID" value="NC_003116.1"/>
</dbReference>
<dbReference type="SMR" id="P32758"/>
<dbReference type="EnsemblBacteria" id="CAM07512">
    <property type="protein sequence ID" value="CAM07512"/>
    <property type="gene ID" value="NMA0198"/>
</dbReference>
<dbReference type="GeneID" id="93387150"/>
<dbReference type="KEGG" id="nma:NMA0198"/>
<dbReference type="HOGENOM" id="CLU_038343_4_0_4"/>
<dbReference type="Proteomes" id="UP000000626">
    <property type="component" value="Chromosome"/>
</dbReference>
<dbReference type="GO" id="GO:0009279">
    <property type="term" value="C:cell outer membrane"/>
    <property type="evidence" value="ECO:0007669"/>
    <property type="project" value="UniProtKB-SubCell"/>
</dbReference>
<dbReference type="GO" id="GO:0046930">
    <property type="term" value="C:pore complex"/>
    <property type="evidence" value="ECO:0007669"/>
    <property type="project" value="UniProtKB-KW"/>
</dbReference>
<dbReference type="GO" id="GO:0015159">
    <property type="term" value="F:polysaccharide transmembrane transporter activity"/>
    <property type="evidence" value="ECO:0007669"/>
    <property type="project" value="InterPro"/>
</dbReference>
<dbReference type="GO" id="GO:0015288">
    <property type="term" value="F:porin activity"/>
    <property type="evidence" value="ECO:0007669"/>
    <property type="project" value="UniProtKB-KW"/>
</dbReference>
<dbReference type="GO" id="GO:0006811">
    <property type="term" value="P:monoatomic ion transport"/>
    <property type="evidence" value="ECO:0007669"/>
    <property type="project" value="UniProtKB-KW"/>
</dbReference>
<dbReference type="Gene3D" id="3.10.560.10">
    <property type="entry name" value="Outer membrane lipoprotein wza domain like"/>
    <property type="match status" value="2"/>
</dbReference>
<dbReference type="Gene3D" id="3.30.1950.10">
    <property type="entry name" value="wza like domain"/>
    <property type="match status" value="1"/>
</dbReference>
<dbReference type="InterPro" id="IPR049712">
    <property type="entry name" value="Poly_export"/>
</dbReference>
<dbReference type="InterPro" id="IPR003715">
    <property type="entry name" value="Poly_export_N"/>
</dbReference>
<dbReference type="InterPro" id="IPR054765">
    <property type="entry name" value="SLBB_dom"/>
</dbReference>
<dbReference type="PANTHER" id="PTHR33619">
    <property type="entry name" value="POLYSACCHARIDE EXPORT PROTEIN GFCE-RELATED"/>
    <property type="match status" value="1"/>
</dbReference>
<dbReference type="PANTHER" id="PTHR33619:SF3">
    <property type="entry name" value="POLYSACCHARIDE EXPORT PROTEIN GFCE-RELATED"/>
    <property type="match status" value="1"/>
</dbReference>
<dbReference type="Pfam" id="PF02563">
    <property type="entry name" value="Poly_export"/>
    <property type="match status" value="1"/>
</dbReference>
<dbReference type="Pfam" id="PF22461">
    <property type="entry name" value="SLBB_2"/>
    <property type="match status" value="1"/>
</dbReference>
<dbReference type="PROSITE" id="PS51257">
    <property type="entry name" value="PROKAR_LIPOPROTEIN"/>
    <property type="match status" value="1"/>
</dbReference>
<sequence length="387" mass="41346">MLKLKFCIVISFLILGSACSAIPSSGPSAKKVVSLGQQSEAQIPEVELIDVNHAVAQSLYKAQVNQSFTQFGDGYASTGTLNIGDVLDIMIWEAPPAVLFGGGLSSMGSGSAQQTKLPEQLVTARGTVSVPFVGDISVVGKTPGQVQEIIKGRLKKMANQPQVMVRLVQNNAANVSVIRAGNSVRMPLTAAGERVLDAVAAVGGSTANVQDTNVQLTRGNVVRTVALEDLVANPRQNILLRRGDVVTMITNPYTFTSMGAVGRTQEIGFSARGLSLSEAIGRMGGLQDRRSDARGVFVFRYTPLVELPAERQDKWIAQGYGSEAEIPTVYRVNMADAHSLFSMQRFPVKNKDVLYVSNAPLAEVQKFLSFVFSPVTSGANSINNLTN</sequence>
<organism>
    <name type="scientific">Neisseria meningitidis serogroup A / serotype 4A (strain DSM 15465 / Z2491)</name>
    <dbReference type="NCBI Taxonomy" id="122587"/>
    <lineage>
        <taxon>Bacteria</taxon>
        <taxon>Pseudomonadati</taxon>
        <taxon>Pseudomonadota</taxon>
        <taxon>Betaproteobacteria</taxon>
        <taxon>Neisseriales</taxon>
        <taxon>Neisseriaceae</taxon>
        <taxon>Neisseria</taxon>
    </lineage>
</organism>
<evidence type="ECO:0000255" key="1"/>
<evidence type="ECO:0000255" key="2">
    <source>
        <dbReference type="PROSITE-ProRule" id="PRU00303"/>
    </source>
</evidence>
<evidence type="ECO:0000305" key="3"/>
<accession>P32758</accession>
<accession>A1IP53</accession>
<protein>
    <recommendedName>
        <fullName>Capsule polysaccharide export outer membrane protein CtrA</fullName>
    </recommendedName>
</protein>
<reference key="1">
    <citation type="journal article" date="1992" name="Infect. Immun.">
        <title>Conserved outer membrane protein of Neisseria meningitidis involved in capsule expression.</title>
        <authorList>
            <person name="Frosch M."/>
            <person name="Mueller D."/>
            <person name="Bousset K."/>
            <person name="Mueller A."/>
        </authorList>
    </citation>
    <scope>NUCLEOTIDE SEQUENCE [GENOMIC DNA]</scope>
    <source>
        <strain>A1493 / Serogroup A</strain>
    </source>
</reference>
<reference key="2">
    <citation type="journal article" date="2000" name="Nature">
        <title>Complete DNA sequence of a serogroup A strain of Neisseria meningitidis Z2491.</title>
        <authorList>
            <person name="Parkhill J."/>
            <person name="Achtman M."/>
            <person name="James K.D."/>
            <person name="Bentley S.D."/>
            <person name="Churcher C.M."/>
            <person name="Klee S.R."/>
            <person name="Morelli G."/>
            <person name="Basham D."/>
            <person name="Brown D."/>
            <person name="Chillingworth T."/>
            <person name="Davies R.M."/>
            <person name="Davis P."/>
            <person name="Devlin K."/>
            <person name="Feltwell T."/>
            <person name="Hamlin N."/>
            <person name="Holroyd S."/>
            <person name="Jagels K."/>
            <person name="Leather S."/>
            <person name="Moule S."/>
            <person name="Mungall K.L."/>
            <person name="Quail M.A."/>
            <person name="Rajandream M.A."/>
            <person name="Rutherford K.M."/>
            <person name="Simmonds M."/>
            <person name="Skelton J."/>
            <person name="Whitehead S."/>
            <person name="Spratt B.G."/>
            <person name="Barrell B.G."/>
        </authorList>
    </citation>
    <scope>NUCLEOTIDE SEQUENCE [LARGE SCALE GENOMIC DNA]</scope>
    <source>
        <strain>DSM 15465 / Z2491</strain>
    </source>
</reference>
<gene>
    <name type="primary">ctrA</name>
    <name type="ordered locus">NMA0198</name>
</gene>
<keyword id="KW-0972">Capsule biogenesis/degradation</keyword>
<keyword id="KW-0998">Cell outer membrane</keyword>
<keyword id="KW-0406">Ion transport</keyword>
<keyword id="KW-0449">Lipoprotein</keyword>
<keyword id="KW-0472">Membrane</keyword>
<keyword id="KW-0564">Palmitate</keyword>
<keyword id="KW-0625">Polysaccharide transport</keyword>
<keyword id="KW-0626">Porin</keyword>
<keyword id="KW-0732">Signal</keyword>
<keyword id="KW-0762">Sugar transport</keyword>
<keyword id="KW-0812">Transmembrane</keyword>
<keyword id="KW-1134">Transmembrane beta strand</keyword>
<keyword id="KW-0813">Transport</keyword>
<feature type="signal peptide" evidence="2">
    <location>
        <begin position="1"/>
        <end position="18"/>
    </location>
</feature>
<feature type="chain" id="PRO_0000025217" description="Capsule polysaccharide export outer membrane protein CtrA">
    <location>
        <begin position="19"/>
        <end position="387"/>
    </location>
</feature>
<feature type="topological domain" description="Periplasmic" evidence="1">
    <location>
        <begin position="19"/>
        <end position="29"/>
    </location>
</feature>
<feature type="transmembrane region" description="Beta stranded" evidence="1">
    <location>
        <begin position="30"/>
        <end position="39"/>
    </location>
</feature>
<feature type="topological domain" description="Extracellular" evidence="1">
    <location>
        <begin position="40"/>
        <end position="53"/>
    </location>
</feature>
<feature type="transmembrane region" description="Beta stranded" evidence="1">
    <location>
        <begin position="54"/>
        <end position="63"/>
    </location>
</feature>
<feature type="topological domain" description="Periplasmic" evidence="1">
    <location>
        <begin position="64"/>
        <end position="79"/>
    </location>
</feature>
<feature type="transmembrane region" description="Beta stranded" evidence="1">
    <location>
        <begin position="80"/>
        <end position="89"/>
    </location>
</feature>
<feature type="topological domain" description="Extracellular" evidence="1">
    <location>
        <begin position="90"/>
        <end position="113"/>
    </location>
</feature>
<feature type="transmembrane region" description="Beta stranded" evidence="1">
    <location>
        <begin position="114"/>
        <end position="123"/>
    </location>
</feature>
<feature type="topological domain" description="Periplasmic" evidence="1">
    <location>
        <begin position="124"/>
        <end position="131"/>
    </location>
</feature>
<feature type="transmembrane region" description="Beta stranded" evidence="1">
    <location>
        <begin position="132"/>
        <end position="141"/>
    </location>
</feature>
<feature type="topological domain" description="Extracellular" evidence="1">
    <location>
        <begin position="142"/>
        <end position="144"/>
    </location>
</feature>
<feature type="transmembrane region" description="Beta stranded" evidence="1">
    <location>
        <begin position="145"/>
        <end position="154"/>
    </location>
</feature>
<feature type="topological domain" description="Periplasmic" evidence="1">
    <location>
        <begin position="155"/>
        <end position="157"/>
    </location>
</feature>
<feature type="transmembrane region" description="Beta stranded" evidence="1">
    <location>
        <begin position="158"/>
        <end position="167"/>
    </location>
</feature>
<feature type="topological domain" description="Extracellular" evidence="1">
    <location>
        <begin position="168"/>
        <end position="174"/>
    </location>
</feature>
<feature type="transmembrane region" description="Beta stranded" evidence="1">
    <location>
        <begin position="175"/>
        <end position="184"/>
    </location>
</feature>
<feature type="topological domain" description="Periplasmic" evidence="1">
    <location>
        <begin position="185"/>
        <end position="387"/>
    </location>
</feature>
<feature type="lipid moiety-binding region" description="N-palmitoyl cysteine" evidence="2">
    <location>
        <position position="19"/>
    </location>
</feature>
<feature type="lipid moiety-binding region" description="S-diacylglycerol cysteine" evidence="2">
    <location>
        <position position="19"/>
    </location>
</feature>
<feature type="sequence conflict" description="In Ref. 1; AAA25457." evidence="3" ref="1">
    <original>A</original>
    <variation>R</variation>
    <location>
        <position position="317"/>
    </location>
</feature>
<proteinExistence type="inferred from homology"/>